<keyword id="KW-0143">Chaperone</keyword>
<keyword id="KW-0413">Isomerase</keyword>
<keyword id="KW-0574">Periplasm</keyword>
<keyword id="KW-1185">Reference proteome</keyword>
<keyword id="KW-0677">Repeat</keyword>
<keyword id="KW-0697">Rotamase</keyword>
<keyword id="KW-0732">Signal</keyword>
<accession>Q07YK0</accession>
<feature type="signal peptide" evidence="1">
    <location>
        <begin position="1"/>
        <end position="22"/>
    </location>
</feature>
<feature type="chain" id="PRO_5000130984" description="Chaperone SurA">
    <location>
        <begin position="23"/>
        <end position="434"/>
    </location>
</feature>
<feature type="domain" description="PpiC 1" evidence="1">
    <location>
        <begin position="173"/>
        <end position="274"/>
    </location>
</feature>
<feature type="domain" description="PpiC 2" evidence="1">
    <location>
        <begin position="283"/>
        <end position="383"/>
    </location>
</feature>
<reference key="1">
    <citation type="submission" date="2006-08" db="EMBL/GenBank/DDBJ databases">
        <title>Complete sequence of Shewanella frigidimarina NCIMB 400.</title>
        <authorList>
            <consortium name="US DOE Joint Genome Institute"/>
            <person name="Copeland A."/>
            <person name="Lucas S."/>
            <person name="Lapidus A."/>
            <person name="Barry K."/>
            <person name="Detter J.C."/>
            <person name="Glavina del Rio T."/>
            <person name="Hammon N."/>
            <person name="Israni S."/>
            <person name="Dalin E."/>
            <person name="Tice H."/>
            <person name="Pitluck S."/>
            <person name="Fredrickson J.K."/>
            <person name="Kolker E."/>
            <person name="McCuel L.A."/>
            <person name="DiChristina T."/>
            <person name="Nealson K.H."/>
            <person name="Newman D."/>
            <person name="Tiedje J.M."/>
            <person name="Zhou J."/>
            <person name="Romine M.F."/>
            <person name="Culley D.E."/>
            <person name="Serres M."/>
            <person name="Chertkov O."/>
            <person name="Brettin T."/>
            <person name="Bruce D."/>
            <person name="Han C."/>
            <person name="Tapia R."/>
            <person name="Gilna P."/>
            <person name="Schmutz J."/>
            <person name="Larimer F."/>
            <person name="Land M."/>
            <person name="Hauser L."/>
            <person name="Kyrpides N."/>
            <person name="Mikhailova N."/>
            <person name="Richardson P."/>
        </authorList>
    </citation>
    <scope>NUCLEOTIDE SEQUENCE [LARGE SCALE GENOMIC DNA]</scope>
    <source>
        <strain>NCIMB 400</strain>
    </source>
</reference>
<dbReference type="EC" id="5.2.1.8" evidence="1"/>
<dbReference type="EMBL" id="CP000447">
    <property type="protein sequence ID" value="ABI72914.1"/>
    <property type="molecule type" value="Genomic_DNA"/>
</dbReference>
<dbReference type="RefSeq" id="WP_011638520.1">
    <property type="nucleotide sequence ID" value="NC_008345.1"/>
</dbReference>
<dbReference type="SMR" id="Q07YK0"/>
<dbReference type="STRING" id="318167.Sfri_3077"/>
<dbReference type="KEGG" id="sfr:Sfri_3077"/>
<dbReference type="eggNOG" id="COG0760">
    <property type="taxonomic scope" value="Bacteria"/>
</dbReference>
<dbReference type="HOGENOM" id="CLU_034646_11_0_6"/>
<dbReference type="OrthoDB" id="14196at2"/>
<dbReference type="Proteomes" id="UP000000684">
    <property type="component" value="Chromosome"/>
</dbReference>
<dbReference type="GO" id="GO:0030288">
    <property type="term" value="C:outer membrane-bounded periplasmic space"/>
    <property type="evidence" value="ECO:0007669"/>
    <property type="project" value="InterPro"/>
</dbReference>
<dbReference type="GO" id="GO:0042277">
    <property type="term" value="F:peptide binding"/>
    <property type="evidence" value="ECO:0007669"/>
    <property type="project" value="InterPro"/>
</dbReference>
<dbReference type="GO" id="GO:0003755">
    <property type="term" value="F:peptidyl-prolyl cis-trans isomerase activity"/>
    <property type="evidence" value="ECO:0007669"/>
    <property type="project" value="UniProtKB-UniRule"/>
</dbReference>
<dbReference type="GO" id="GO:0051082">
    <property type="term" value="F:unfolded protein binding"/>
    <property type="evidence" value="ECO:0007669"/>
    <property type="project" value="UniProtKB-UniRule"/>
</dbReference>
<dbReference type="GO" id="GO:0043165">
    <property type="term" value="P:Gram-negative-bacterium-type cell outer membrane assembly"/>
    <property type="evidence" value="ECO:0007669"/>
    <property type="project" value="InterPro"/>
</dbReference>
<dbReference type="GO" id="GO:0006457">
    <property type="term" value="P:protein folding"/>
    <property type="evidence" value="ECO:0007669"/>
    <property type="project" value="UniProtKB-UniRule"/>
</dbReference>
<dbReference type="GO" id="GO:0050821">
    <property type="term" value="P:protein stabilization"/>
    <property type="evidence" value="ECO:0007669"/>
    <property type="project" value="InterPro"/>
</dbReference>
<dbReference type="Gene3D" id="3.10.50.40">
    <property type="match status" value="2"/>
</dbReference>
<dbReference type="Gene3D" id="1.10.4030.10">
    <property type="entry name" value="Porin chaperone SurA, peptide-binding domain"/>
    <property type="match status" value="2"/>
</dbReference>
<dbReference type="HAMAP" id="MF_01183">
    <property type="entry name" value="Chaperone_SurA"/>
    <property type="match status" value="1"/>
</dbReference>
<dbReference type="InterPro" id="IPR050280">
    <property type="entry name" value="OMP_Chaperone_SurA"/>
</dbReference>
<dbReference type="InterPro" id="IPR046357">
    <property type="entry name" value="PPIase_dom_sf"/>
</dbReference>
<dbReference type="InterPro" id="IPR000297">
    <property type="entry name" value="PPIase_PpiC"/>
</dbReference>
<dbReference type="InterPro" id="IPR023058">
    <property type="entry name" value="PPIase_PpiC_CS"/>
</dbReference>
<dbReference type="InterPro" id="IPR023034">
    <property type="entry name" value="PPIase_SurA"/>
</dbReference>
<dbReference type="InterPro" id="IPR015391">
    <property type="entry name" value="SurA_N"/>
</dbReference>
<dbReference type="InterPro" id="IPR027304">
    <property type="entry name" value="Trigger_fact/SurA_dom_sf"/>
</dbReference>
<dbReference type="NCBIfam" id="NF008038">
    <property type="entry name" value="PRK10770.1"/>
    <property type="match status" value="1"/>
</dbReference>
<dbReference type="PANTHER" id="PTHR47637">
    <property type="entry name" value="CHAPERONE SURA"/>
    <property type="match status" value="1"/>
</dbReference>
<dbReference type="PANTHER" id="PTHR47637:SF1">
    <property type="entry name" value="CHAPERONE SURA"/>
    <property type="match status" value="1"/>
</dbReference>
<dbReference type="Pfam" id="PF00639">
    <property type="entry name" value="Rotamase"/>
    <property type="match status" value="2"/>
</dbReference>
<dbReference type="Pfam" id="PF09312">
    <property type="entry name" value="SurA_N"/>
    <property type="match status" value="1"/>
</dbReference>
<dbReference type="SUPFAM" id="SSF54534">
    <property type="entry name" value="FKBP-like"/>
    <property type="match status" value="2"/>
</dbReference>
<dbReference type="SUPFAM" id="SSF109998">
    <property type="entry name" value="Triger factor/SurA peptide-binding domain-like"/>
    <property type="match status" value="1"/>
</dbReference>
<dbReference type="PROSITE" id="PS01096">
    <property type="entry name" value="PPIC_PPIASE_1"/>
    <property type="match status" value="1"/>
</dbReference>
<dbReference type="PROSITE" id="PS50198">
    <property type="entry name" value="PPIC_PPIASE_2"/>
    <property type="match status" value="2"/>
</dbReference>
<organism>
    <name type="scientific">Shewanella frigidimarina (strain NCIMB 400)</name>
    <dbReference type="NCBI Taxonomy" id="318167"/>
    <lineage>
        <taxon>Bacteria</taxon>
        <taxon>Pseudomonadati</taxon>
        <taxon>Pseudomonadota</taxon>
        <taxon>Gammaproteobacteria</taxon>
        <taxon>Alteromonadales</taxon>
        <taxon>Shewanellaceae</taxon>
        <taxon>Shewanella</taxon>
    </lineage>
</organism>
<sequence length="434" mass="48505">MKHSKKIIFALLALAMSNTSMAAPMPLDRVSVQINDGIILESEITNMVSTVKANAKAANQTLPSDDALRTQVIERLILTHLQMQMAERIGLQIGDLQLDQTIENIAKEQKVTVAQMQQTIESEGTSFSQYREQLRQEVTLGEIQRIQVQRRIQVSPQEISGLVKLIQEQGLKDVEFQIGHILIEVPSNPTSEQLEGASRRAEIVLKRLNNGDDFRSTAIASSSGPKALEGGIWDFMNINEMPTLFAEVISNAKKGDIIGPIKSGSGFHIIKVVDTRGLQTQEVEEVKSRHILLKPSPILSEDRAKAMLANFLAQVRAGDADFAKLATQYSEDPGSAAKGGELGWADPSMYVPEFTQTLASLQEGQYSEPFRTTHGWHVVQLESRRKTDATEQFNSNRAHQLIFRRKFNEELQNWLDEMRSEAYIEIVEPESKRG</sequence>
<proteinExistence type="inferred from homology"/>
<protein>
    <recommendedName>
        <fullName evidence="1">Chaperone SurA</fullName>
    </recommendedName>
    <alternativeName>
        <fullName evidence="1">Peptidyl-prolyl cis-trans isomerase SurA</fullName>
        <shortName evidence="1">PPIase SurA</shortName>
        <ecNumber evidence="1">5.2.1.8</ecNumber>
    </alternativeName>
    <alternativeName>
        <fullName evidence="1">Rotamase SurA</fullName>
    </alternativeName>
</protein>
<name>SURA_SHEFN</name>
<comment type="function">
    <text evidence="1">Chaperone involved in the correct folding and assembly of outer membrane proteins. Recognizes specific patterns of aromatic residues and the orientation of their side chains, which are found more frequently in integral outer membrane proteins. May act in both early periplasmic and late outer membrane-associated steps of protein maturation.</text>
</comment>
<comment type="catalytic activity">
    <reaction evidence="1">
        <text>[protein]-peptidylproline (omega=180) = [protein]-peptidylproline (omega=0)</text>
        <dbReference type="Rhea" id="RHEA:16237"/>
        <dbReference type="Rhea" id="RHEA-COMP:10747"/>
        <dbReference type="Rhea" id="RHEA-COMP:10748"/>
        <dbReference type="ChEBI" id="CHEBI:83833"/>
        <dbReference type="ChEBI" id="CHEBI:83834"/>
        <dbReference type="EC" id="5.2.1.8"/>
    </reaction>
</comment>
<comment type="subcellular location">
    <subcellularLocation>
        <location evidence="1">Periplasm</location>
    </subcellularLocation>
    <text evidence="1">Is capable of associating with the outer membrane.</text>
</comment>
<comment type="domain">
    <text evidence="1">The PPIase activity resides only in the second parvulin domain. The N-terminal region and the C-terminal tail are necessary and sufficient for the chaperone activity of SurA. The PPIase activity is dispensable for SurA to function as a chaperone. The N-terminal region and the C-terminal tail are also required for porin recognition.</text>
</comment>
<gene>
    <name evidence="1" type="primary">surA</name>
    <name type="ordered locus">Sfri_3077</name>
</gene>
<evidence type="ECO:0000255" key="1">
    <source>
        <dbReference type="HAMAP-Rule" id="MF_01183"/>
    </source>
</evidence>